<name>MYG_DRONO</name>
<keyword id="KW-0963">Cytoplasm</keyword>
<keyword id="KW-0903">Direct protein sequencing</keyword>
<keyword id="KW-0349">Heme</keyword>
<keyword id="KW-0408">Iron</keyword>
<keyword id="KW-0479">Metal-binding</keyword>
<keyword id="KW-0514">Muscle protein</keyword>
<keyword id="KW-0560">Oxidoreductase</keyword>
<keyword id="KW-0561">Oxygen transport</keyword>
<keyword id="KW-0813">Transport</keyword>
<proteinExistence type="evidence at protein level"/>
<sequence length="154" mass="17507">MGLSDQEWQHVLTIWGKVESDLAGHGHEILMRLFHDLPETLDRFERFKGLTTPDQMKASEELKKHGVTVLTQLGKILKLKGKHEAELKPLAQTHATKHKIPVKYLEFISEVIIKVIAEKHSADFGADSQAAMKKALELFRNDMASKYKEFGFQG</sequence>
<gene>
    <name evidence="5" type="primary">MB</name>
</gene>
<organism>
    <name type="scientific">Dromaius novaehollandiae</name>
    <name type="common">Emu</name>
    <dbReference type="NCBI Taxonomy" id="8790"/>
    <lineage>
        <taxon>Eukaryota</taxon>
        <taxon>Metazoa</taxon>
        <taxon>Chordata</taxon>
        <taxon>Craniata</taxon>
        <taxon>Vertebrata</taxon>
        <taxon>Euteleostomi</taxon>
        <taxon>Archelosauria</taxon>
        <taxon>Archosauria</taxon>
        <taxon>Dinosauria</taxon>
        <taxon>Saurischia</taxon>
        <taxon>Theropoda</taxon>
        <taxon>Coelurosauria</taxon>
        <taxon>Aves</taxon>
        <taxon>Palaeognathae</taxon>
        <taxon>Casuariiformes</taxon>
        <taxon>Dromaiidae</taxon>
        <taxon>Dromaius</taxon>
    </lineage>
</organism>
<feature type="initiator methionine" description="Removed" evidence="7">
    <location>
        <position position="1"/>
    </location>
</feature>
<feature type="chain" id="PRO_0000404698" description="Myoglobin" evidence="9">
    <location>
        <begin position="2"/>
        <end position="154"/>
    </location>
</feature>
<feature type="domain" description="Globin" evidence="6">
    <location>
        <begin position="2"/>
        <end position="148"/>
    </location>
</feature>
<feature type="binding site" evidence="4">
    <location>
        <position position="65"/>
    </location>
    <ligand>
        <name>nitrite</name>
        <dbReference type="ChEBI" id="CHEBI:16301"/>
    </ligand>
</feature>
<feature type="binding site" evidence="3 6">
    <location>
        <position position="65"/>
    </location>
    <ligand>
        <name>O2</name>
        <dbReference type="ChEBI" id="CHEBI:15379"/>
    </ligand>
</feature>
<feature type="binding site" description="proximal binding residue" evidence="1">
    <location>
        <position position="94"/>
    </location>
    <ligand>
        <name>heme b</name>
        <dbReference type="ChEBI" id="CHEBI:60344"/>
    </ligand>
    <ligandPart>
        <name>Fe</name>
        <dbReference type="ChEBI" id="CHEBI:18248"/>
    </ligandPart>
</feature>
<accession>P86874</accession>
<evidence type="ECO:0000250" key="1">
    <source>
        <dbReference type="UniProtKB" id="P02144"/>
    </source>
</evidence>
<evidence type="ECO:0000250" key="2">
    <source>
        <dbReference type="UniProtKB" id="P02185"/>
    </source>
</evidence>
<evidence type="ECO:0000250" key="3">
    <source>
        <dbReference type="UniProtKB" id="P02189"/>
    </source>
</evidence>
<evidence type="ECO:0000250" key="4">
    <source>
        <dbReference type="UniProtKB" id="P68082"/>
    </source>
</evidence>
<evidence type="ECO:0000250" key="5">
    <source>
        <dbReference type="UniProtKB" id="P85077"/>
    </source>
</evidence>
<evidence type="ECO:0000255" key="6">
    <source>
        <dbReference type="PROSITE-ProRule" id="PRU00238"/>
    </source>
</evidence>
<evidence type="ECO:0000269" key="7">
    <source>
    </source>
</evidence>
<evidence type="ECO:0000303" key="8">
    <source>
    </source>
</evidence>
<evidence type="ECO:0000305" key="9"/>
<protein>
    <recommendedName>
        <fullName evidence="8">Myoglobin</fullName>
    </recommendedName>
    <alternativeName>
        <fullName evidence="1">Nitrite reductase MB</fullName>
        <ecNumber evidence="1">1.7.-.-</ecNumber>
    </alternativeName>
    <alternativeName>
        <fullName evidence="1">Pseudoperoxidase MB</fullName>
        <ecNumber evidence="1">1.11.1.-</ecNumber>
    </alternativeName>
</protein>
<reference evidence="9" key="1">
    <citation type="journal article" date="2010" name="Meat Sci.">
        <title>Amino acid sequence of myoglobin from emu (Dromaius novaehollandiae) skeletal muscle.</title>
        <authorList>
            <person name="Suman S.P."/>
            <person name="Joseph P."/>
            <person name="Li S."/>
            <person name="Beach C.M."/>
            <person name="Fontaine M."/>
            <person name="Steinke L."/>
        </authorList>
    </citation>
    <scope>PROTEIN SEQUENCE OF 2-154</scope>
    <scope>MASS SPECTROMETRY</scope>
    <source>
        <tissue evidence="7">Muscle</tissue>
    </source>
</reference>
<comment type="function">
    <text evidence="1">Monomeric heme protein which primary function is to store oxygen and facilitate its diffusion within muscle tissues. Reversibly binds oxygen through a pentacoordinated heme iron and enables its timely and efficient release as needed during periods of heightened demand. Depending on the oxidative conditions of tissues and cells, and in addition to its ability to bind oxygen, it also has a nitrite reductase activity whereby it regulates the production of bioactive nitric oxide. Under stress conditions, like hypoxia and anoxia, it also protects cells against reactive oxygen species thanks to its pseudoperoxidase activity.</text>
</comment>
<comment type="catalytic activity">
    <reaction evidence="1">
        <text>Fe(III)-heme b-[protein] + nitric oxide + H2O = Fe(II)-heme b-[protein] + nitrite + 2 H(+)</text>
        <dbReference type="Rhea" id="RHEA:77711"/>
        <dbReference type="Rhea" id="RHEA-COMP:18975"/>
        <dbReference type="Rhea" id="RHEA-COMP:18976"/>
        <dbReference type="ChEBI" id="CHEBI:15377"/>
        <dbReference type="ChEBI" id="CHEBI:15378"/>
        <dbReference type="ChEBI" id="CHEBI:16301"/>
        <dbReference type="ChEBI" id="CHEBI:16480"/>
        <dbReference type="ChEBI" id="CHEBI:55376"/>
        <dbReference type="ChEBI" id="CHEBI:60344"/>
    </reaction>
    <physiologicalReaction direction="right-to-left" evidence="1">
        <dbReference type="Rhea" id="RHEA:77713"/>
    </physiologicalReaction>
</comment>
<comment type="catalytic activity">
    <reaction evidence="1">
        <text>H2O2 + AH2 = A + 2 H2O</text>
        <dbReference type="Rhea" id="RHEA:30275"/>
        <dbReference type="ChEBI" id="CHEBI:13193"/>
        <dbReference type="ChEBI" id="CHEBI:15377"/>
        <dbReference type="ChEBI" id="CHEBI:16240"/>
        <dbReference type="ChEBI" id="CHEBI:17499"/>
    </reaction>
</comment>
<comment type="subunit">
    <text evidence="2">Monomeric.</text>
</comment>
<comment type="subcellular location">
    <subcellularLocation>
        <location evidence="1">Cytoplasm</location>
        <location evidence="1">Sarcoplasm</location>
    </subcellularLocation>
</comment>
<comment type="mass spectrometry" mass="17380.0" method="MALDI" evidence="7"/>
<comment type="similarity">
    <text evidence="6">Belongs to the globin family.</text>
</comment>
<dbReference type="EC" id="1.7.-.-" evidence="1"/>
<dbReference type="EC" id="1.11.1.-" evidence="1"/>
<dbReference type="SMR" id="P86874"/>
<dbReference type="Proteomes" id="UP000694423">
    <property type="component" value="Unplaced"/>
</dbReference>
<dbReference type="GO" id="GO:0070062">
    <property type="term" value="C:extracellular exosome"/>
    <property type="evidence" value="ECO:0007669"/>
    <property type="project" value="TreeGrafter"/>
</dbReference>
<dbReference type="GO" id="GO:0016528">
    <property type="term" value="C:sarcoplasm"/>
    <property type="evidence" value="ECO:0000250"/>
    <property type="project" value="UniProtKB"/>
</dbReference>
<dbReference type="GO" id="GO:0020037">
    <property type="term" value="F:heme binding"/>
    <property type="evidence" value="ECO:0007669"/>
    <property type="project" value="InterPro"/>
</dbReference>
<dbReference type="GO" id="GO:0046872">
    <property type="term" value="F:metal ion binding"/>
    <property type="evidence" value="ECO:0007669"/>
    <property type="project" value="UniProtKB-KW"/>
</dbReference>
<dbReference type="GO" id="GO:0098809">
    <property type="term" value="F:nitrite reductase activity"/>
    <property type="evidence" value="ECO:0000250"/>
    <property type="project" value="UniProtKB"/>
</dbReference>
<dbReference type="GO" id="GO:0019825">
    <property type="term" value="F:oxygen binding"/>
    <property type="evidence" value="ECO:0007669"/>
    <property type="project" value="InterPro"/>
</dbReference>
<dbReference type="GO" id="GO:0005344">
    <property type="term" value="F:oxygen carrier activity"/>
    <property type="evidence" value="ECO:0000250"/>
    <property type="project" value="UniProtKB"/>
</dbReference>
<dbReference type="GO" id="GO:0004601">
    <property type="term" value="F:peroxidase activity"/>
    <property type="evidence" value="ECO:0000250"/>
    <property type="project" value="UniProtKB"/>
</dbReference>
<dbReference type="GO" id="GO:0019430">
    <property type="term" value="P:removal of superoxide radicals"/>
    <property type="evidence" value="ECO:0000250"/>
    <property type="project" value="UniProtKB"/>
</dbReference>
<dbReference type="Gene3D" id="6.10.140.2100">
    <property type="match status" value="1"/>
</dbReference>
<dbReference type="Gene3D" id="6.10.140.2110">
    <property type="match status" value="1"/>
</dbReference>
<dbReference type="InterPro" id="IPR000971">
    <property type="entry name" value="Globin"/>
</dbReference>
<dbReference type="InterPro" id="IPR009050">
    <property type="entry name" value="Globin-like_sf"/>
</dbReference>
<dbReference type="InterPro" id="IPR002335">
    <property type="entry name" value="Myoglobin"/>
</dbReference>
<dbReference type="PANTHER" id="PTHR47132">
    <property type="entry name" value="MYOGLOBIN"/>
    <property type="match status" value="1"/>
</dbReference>
<dbReference type="PANTHER" id="PTHR47132:SF1">
    <property type="entry name" value="MYOGLOBIN"/>
    <property type="match status" value="1"/>
</dbReference>
<dbReference type="Pfam" id="PF00042">
    <property type="entry name" value="Globin"/>
    <property type="match status" value="1"/>
</dbReference>
<dbReference type="PRINTS" id="PR00613">
    <property type="entry name" value="MYOGLOBIN"/>
</dbReference>
<dbReference type="SUPFAM" id="SSF46458">
    <property type="entry name" value="Globin-like"/>
    <property type="match status" value="1"/>
</dbReference>
<dbReference type="PROSITE" id="PS01033">
    <property type="entry name" value="GLOBIN"/>
    <property type="match status" value="1"/>
</dbReference>